<reference key="1">
    <citation type="journal article" date="2008" name="Chem. Biol. Interact.">
        <title>Extending the Bacillus cereus group genomics to putative food-borne pathogens of different toxicity.</title>
        <authorList>
            <person name="Lapidus A."/>
            <person name="Goltsman E."/>
            <person name="Auger S."/>
            <person name="Galleron N."/>
            <person name="Segurens B."/>
            <person name="Dossat C."/>
            <person name="Land M.L."/>
            <person name="Broussolle V."/>
            <person name="Brillard J."/>
            <person name="Guinebretiere M.-H."/>
            <person name="Sanchis V."/>
            <person name="Nguen-the C."/>
            <person name="Lereclus D."/>
            <person name="Richardson P."/>
            <person name="Wincker P."/>
            <person name="Weissenbach J."/>
            <person name="Ehrlich S.D."/>
            <person name="Sorokin A."/>
        </authorList>
    </citation>
    <scope>NUCLEOTIDE SEQUENCE [LARGE SCALE GENOMIC DNA]</scope>
    <source>
        <strain>KBAB4</strain>
    </source>
</reference>
<dbReference type="EMBL" id="CP000903">
    <property type="protein sequence ID" value="ABY41331.1"/>
    <property type="molecule type" value="Genomic_DNA"/>
</dbReference>
<dbReference type="RefSeq" id="WP_002009693.1">
    <property type="nucleotide sequence ID" value="NC_010184.1"/>
</dbReference>
<dbReference type="SMR" id="A9VN80"/>
<dbReference type="GeneID" id="66264879"/>
<dbReference type="KEGG" id="bwe:BcerKBAB4_0062"/>
<dbReference type="eggNOG" id="COG1281">
    <property type="taxonomic scope" value="Bacteria"/>
</dbReference>
<dbReference type="HOGENOM" id="CLU_054493_1_0_9"/>
<dbReference type="Proteomes" id="UP000002154">
    <property type="component" value="Chromosome"/>
</dbReference>
<dbReference type="GO" id="GO:0005737">
    <property type="term" value="C:cytoplasm"/>
    <property type="evidence" value="ECO:0007669"/>
    <property type="project" value="UniProtKB-SubCell"/>
</dbReference>
<dbReference type="GO" id="GO:0044183">
    <property type="term" value="F:protein folding chaperone"/>
    <property type="evidence" value="ECO:0007669"/>
    <property type="project" value="TreeGrafter"/>
</dbReference>
<dbReference type="GO" id="GO:0051082">
    <property type="term" value="F:unfolded protein binding"/>
    <property type="evidence" value="ECO:0007669"/>
    <property type="project" value="UniProtKB-UniRule"/>
</dbReference>
<dbReference type="GO" id="GO:0042026">
    <property type="term" value="P:protein refolding"/>
    <property type="evidence" value="ECO:0007669"/>
    <property type="project" value="TreeGrafter"/>
</dbReference>
<dbReference type="CDD" id="cd00498">
    <property type="entry name" value="Hsp33"/>
    <property type="match status" value="1"/>
</dbReference>
<dbReference type="Gene3D" id="3.55.30.10">
    <property type="entry name" value="Hsp33 domain"/>
    <property type="match status" value="1"/>
</dbReference>
<dbReference type="Gene3D" id="3.90.1280.10">
    <property type="entry name" value="HSP33 redox switch-like"/>
    <property type="match status" value="1"/>
</dbReference>
<dbReference type="HAMAP" id="MF_00117">
    <property type="entry name" value="HslO"/>
    <property type="match status" value="1"/>
</dbReference>
<dbReference type="InterPro" id="IPR000397">
    <property type="entry name" value="Heat_shock_Hsp33"/>
</dbReference>
<dbReference type="InterPro" id="IPR016154">
    <property type="entry name" value="Heat_shock_Hsp33_C"/>
</dbReference>
<dbReference type="InterPro" id="IPR016153">
    <property type="entry name" value="Heat_shock_Hsp33_N"/>
</dbReference>
<dbReference type="NCBIfam" id="NF001033">
    <property type="entry name" value="PRK00114.1"/>
    <property type="match status" value="1"/>
</dbReference>
<dbReference type="PANTHER" id="PTHR30111">
    <property type="entry name" value="33 KDA CHAPERONIN"/>
    <property type="match status" value="1"/>
</dbReference>
<dbReference type="PANTHER" id="PTHR30111:SF1">
    <property type="entry name" value="33 KDA CHAPERONIN"/>
    <property type="match status" value="1"/>
</dbReference>
<dbReference type="Pfam" id="PF01430">
    <property type="entry name" value="HSP33"/>
    <property type="match status" value="1"/>
</dbReference>
<dbReference type="PIRSF" id="PIRSF005261">
    <property type="entry name" value="Heat_shock_Hsp33"/>
    <property type="match status" value="1"/>
</dbReference>
<dbReference type="SUPFAM" id="SSF64397">
    <property type="entry name" value="Hsp33 domain"/>
    <property type="match status" value="1"/>
</dbReference>
<dbReference type="SUPFAM" id="SSF118352">
    <property type="entry name" value="HSP33 redox switch-like"/>
    <property type="match status" value="1"/>
</dbReference>
<accession>A9VN80</accession>
<protein>
    <recommendedName>
        <fullName evidence="1">33 kDa chaperonin</fullName>
    </recommendedName>
    <alternativeName>
        <fullName evidence="1">Heat shock protein 33 homolog</fullName>
        <shortName evidence="1">HSP33</shortName>
    </alternativeName>
</protein>
<evidence type="ECO:0000255" key="1">
    <source>
        <dbReference type="HAMAP-Rule" id="MF_00117"/>
    </source>
</evidence>
<feature type="chain" id="PRO_1000095010" description="33 kDa chaperonin">
    <location>
        <begin position="1"/>
        <end position="291"/>
    </location>
</feature>
<feature type="disulfide bond" description="Redox-active" evidence="1">
    <location>
        <begin position="237"/>
        <end position="239"/>
    </location>
</feature>
<feature type="disulfide bond" description="Redox-active" evidence="1">
    <location>
        <begin position="270"/>
        <end position="273"/>
    </location>
</feature>
<gene>
    <name evidence="1" type="primary">hslO</name>
    <name type="ordered locus">BcerKBAB4_0062</name>
</gene>
<comment type="function">
    <text evidence="1">Redox regulated molecular chaperone. Protects both thermally unfolding and oxidatively damaged proteins from irreversible aggregation. Plays an important role in the bacterial defense system toward oxidative stress.</text>
</comment>
<comment type="subcellular location">
    <subcellularLocation>
        <location evidence="1">Cytoplasm</location>
    </subcellularLocation>
</comment>
<comment type="PTM">
    <text evidence="1">Under oxidizing conditions two disulfide bonds are formed involving the reactive cysteines. Under reducing conditions zinc is bound to the reactive cysteines and the protein is inactive.</text>
</comment>
<comment type="similarity">
    <text evidence="1">Belongs to the HSP33 family.</text>
</comment>
<organism>
    <name type="scientific">Bacillus mycoides (strain KBAB4)</name>
    <name type="common">Bacillus weihenstephanensis</name>
    <dbReference type="NCBI Taxonomy" id="315730"/>
    <lineage>
        <taxon>Bacteria</taxon>
        <taxon>Bacillati</taxon>
        <taxon>Bacillota</taxon>
        <taxon>Bacilli</taxon>
        <taxon>Bacillales</taxon>
        <taxon>Bacillaceae</taxon>
        <taxon>Bacillus</taxon>
        <taxon>Bacillus cereus group</taxon>
    </lineage>
</organism>
<sequence>MKDYLVKALAFNGEVRAYSVRTTNTVSEAQKRHDTWRTASAALGRSLTAGTMMGAMLKGEQKLTIKVEGNGPIGPILVDAHANGDVRGYVTNPHVDFEGTEQGKLRVYQAVGTEGFVTVIKDIGMREPFIGQSPIVSGELGEDFTYYFAVSEQTPSSVGVGVLVNGDDSVLAAGGFILQIMPGAQEETISFIEERLQQIPPVSQLIEQGLSPEELLYEVLGEDKVKVLETMDVQFNCTCSRERIESVLISLGKAELEQIRAEEEETEVHCHFCNERHKFAKEDITSLIEKL</sequence>
<name>HSLO_BACMK</name>
<proteinExistence type="inferred from homology"/>
<keyword id="KW-0143">Chaperone</keyword>
<keyword id="KW-0963">Cytoplasm</keyword>
<keyword id="KW-1015">Disulfide bond</keyword>
<keyword id="KW-0676">Redox-active center</keyword>
<keyword id="KW-0862">Zinc</keyword>